<keyword id="KW-0002">3D-structure</keyword>
<keyword id="KW-0150">Chloroplast</keyword>
<keyword id="KW-0472">Membrane</keyword>
<keyword id="KW-0602">Photosynthesis</keyword>
<keyword id="KW-0603">Photosystem I</keyword>
<keyword id="KW-0934">Plastid</keyword>
<keyword id="KW-1185">Reference proteome</keyword>
<keyword id="KW-0793">Thylakoid</keyword>
<keyword id="KW-0812">Transmembrane</keyword>
<keyword id="KW-1133">Transmembrane helix</keyword>
<geneLocation type="chloroplast"/>
<reference key="1">
    <citation type="journal article" date="2003" name="Nucleic Acids Res.">
        <title>Complete chloroplast DNA sequence of the moss Physcomitrella patens: evidence for the loss and relocation of rpoA from the chloroplast to the nucleus.</title>
        <authorList>
            <person name="Sugiura C."/>
            <person name="Kobayashi Y."/>
            <person name="Setsuyuki A."/>
            <person name="Sugita C."/>
            <person name="Sugita M."/>
        </authorList>
    </citation>
    <scope>NUCLEOTIDE SEQUENCE [LARGE SCALE GENOMIC DNA]</scope>
    <source>
        <strain>cv. Gransden 2004</strain>
    </source>
</reference>
<comment type="function">
    <text evidence="1">May help in the organization of the PsaE and PsaF subunits.</text>
</comment>
<comment type="subcellular location">
    <subcellularLocation>
        <location evidence="1">Plastid</location>
        <location evidence="1">Chloroplast thylakoid membrane</location>
        <topology evidence="1">Single-pass membrane protein</topology>
    </subcellularLocation>
</comment>
<comment type="similarity">
    <text evidence="1">Belongs to the PsaJ family.</text>
</comment>
<organism>
    <name type="scientific">Physcomitrium patens</name>
    <name type="common">Spreading-leaved earth moss</name>
    <name type="synonym">Physcomitrella patens</name>
    <dbReference type="NCBI Taxonomy" id="3218"/>
    <lineage>
        <taxon>Eukaryota</taxon>
        <taxon>Viridiplantae</taxon>
        <taxon>Streptophyta</taxon>
        <taxon>Embryophyta</taxon>
        <taxon>Bryophyta</taxon>
        <taxon>Bryophytina</taxon>
        <taxon>Bryopsida</taxon>
        <taxon>Funariidae</taxon>
        <taxon>Funariales</taxon>
        <taxon>Funariaceae</taxon>
        <taxon>Physcomitrium</taxon>
    </lineage>
</organism>
<protein>
    <recommendedName>
        <fullName evidence="1">Photosystem I reaction center subunit IX</fullName>
    </recommendedName>
    <alternativeName>
        <fullName evidence="1">PSI-J</fullName>
    </alternativeName>
</protein>
<proteinExistence type="evidence at protein level"/>
<dbReference type="EMBL" id="AP005672">
    <property type="protein sequence ID" value="BAC85030.1"/>
    <property type="molecule type" value="Genomic_DNA"/>
</dbReference>
<dbReference type="RefSeq" id="NP_904180.1">
    <property type="nucleotide sequence ID" value="NC_005087.2"/>
</dbReference>
<dbReference type="RefSeq" id="YP_009477511.1">
    <property type="nucleotide sequence ID" value="NC_037465.1"/>
</dbReference>
<dbReference type="PDB" id="6L35">
    <property type="method" value="EM"/>
    <property type="resolution" value="3.23 A"/>
    <property type="chains" value="J=1-41"/>
</dbReference>
<dbReference type="PDB" id="7KSQ">
    <property type="method" value="EM"/>
    <property type="resolution" value="2.80 A"/>
    <property type="chains" value="J=1-41"/>
</dbReference>
<dbReference type="PDB" id="7KUX">
    <property type="method" value="EM"/>
    <property type="resolution" value="2.80 A"/>
    <property type="chains" value="J=1-41"/>
</dbReference>
<dbReference type="PDB" id="7XQP">
    <property type="method" value="EM"/>
    <property type="resolution" value="2.68 A"/>
    <property type="chains" value="J=1-41"/>
</dbReference>
<dbReference type="PDB" id="8HTU">
    <property type="method" value="EM"/>
    <property type="resolution" value="2.87 A"/>
    <property type="chains" value="J=1-41"/>
</dbReference>
<dbReference type="PDBsum" id="6L35"/>
<dbReference type="PDBsum" id="7KSQ"/>
<dbReference type="PDBsum" id="7KUX"/>
<dbReference type="PDBsum" id="7XQP"/>
<dbReference type="PDBsum" id="8HTU"/>
<dbReference type="EMDB" id="EMD-0821"/>
<dbReference type="EMDB" id="EMD-23023"/>
<dbReference type="EMDB" id="EMD-23040"/>
<dbReference type="EMDB" id="EMD-33401"/>
<dbReference type="EMDB" id="EMD-35018"/>
<dbReference type="SMR" id="Q6YXM2"/>
<dbReference type="FunCoup" id="Q6YXM2">
    <property type="interactions" value="52"/>
</dbReference>
<dbReference type="STRING" id="3218.Q6YXM2"/>
<dbReference type="GeneID" id="2546769"/>
<dbReference type="GeneID" id="36487123"/>
<dbReference type="KEGG" id="ppp:2546769"/>
<dbReference type="InParanoid" id="Q6YXM2"/>
<dbReference type="OrthoDB" id="724296at2759"/>
<dbReference type="Proteomes" id="UP000006727">
    <property type="component" value="Chloroplast"/>
</dbReference>
<dbReference type="GO" id="GO:0009535">
    <property type="term" value="C:chloroplast thylakoid membrane"/>
    <property type="evidence" value="ECO:0007669"/>
    <property type="project" value="UniProtKB-SubCell"/>
</dbReference>
<dbReference type="GO" id="GO:0009522">
    <property type="term" value="C:photosystem I"/>
    <property type="evidence" value="ECO:0007669"/>
    <property type="project" value="UniProtKB-KW"/>
</dbReference>
<dbReference type="GO" id="GO:0015979">
    <property type="term" value="P:photosynthesis"/>
    <property type="evidence" value="ECO:0007669"/>
    <property type="project" value="UniProtKB-UniRule"/>
</dbReference>
<dbReference type="Gene3D" id="1.20.5.510">
    <property type="entry name" value="Single helix bin"/>
    <property type="match status" value="1"/>
</dbReference>
<dbReference type="HAMAP" id="MF_00522">
    <property type="entry name" value="PSI_PsaJ"/>
    <property type="match status" value="1"/>
</dbReference>
<dbReference type="InterPro" id="IPR002615">
    <property type="entry name" value="PSI_PsaJ"/>
</dbReference>
<dbReference type="InterPro" id="IPR036062">
    <property type="entry name" value="PSI_PsaJ_sf"/>
</dbReference>
<dbReference type="PANTHER" id="PTHR36082">
    <property type="match status" value="1"/>
</dbReference>
<dbReference type="PANTHER" id="PTHR36082:SF2">
    <property type="entry name" value="PHOTOSYSTEM I REACTION CENTER SUBUNIT IX"/>
    <property type="match status" value="1"/>
</dbReference>
<dbReference type="Pfam" id="PF01701">
    <property type="entry name" value="PSI_PsaJ"/>
    <property type="match status" value="1"/>
</dbReference>
<dbReference type="SUPFAM" id="SSF81544">
    <property type="entry name" value="Subunit IX of photosystem I reaction centre, PsaJ"/>
    <property type="match status" value="1"/>
</dbReference>
<evidence type="ECO:0000255" key="1">
    <source>
        <dbReference type="HAMAP-Rule" id="MF_00522"/>
    </source>
</evidence>
<evidence type="ECO:0007829" key="2">
    <source>
        <dbReference type="PDB" id="7XQP"/>
    </source>
</evidence>
<sequence length="41" mass="4596">MQDVKTYLSTAPVLATLWFGFLAGLLIEINRFFPDALVLPL</sequence>
<name>PSAJ_PHYPA</name>
<feature type="chain" id="PRO_0000207806" description="Photosystem I reaction center subunit IX">
    <location>
        <begin position="1"/>
        <end position="41"/>
    </location>
</feature>
<feature type="transmembrane region" description="Helical" evidence="1">
    <location>
        <begin position="7"/>
        <end position="27"/>
    </location>
</feature>
<feature type="helix" evidence="2">
    <location>
        <begin position="2"/>
        <end position="8"/>
    </location>
</feature>
<feature type="helix" evidence="2">
    <location>
        <begin position="11"/>
        <end position="32"/>
    </location>
</feature>
<gene>
    <name evidence="1" type="primary">psaJ</name>
</gene>
<accession>Q6YXM2</accession>